<evidence type="ECO:0000255" key="1">
    <source>
        <dbReference type="HAMAP-Rule" id="MF_00432"/>
    </source>
</evidence>
<evidence type="ECO:0000305" key="2"/>
<protein>
    <recommendedName>
        <fullName evidence="1">Cytochrome b6-f complex subunit 5</fullName>
    </recommendedName>
    <alternativeName>
        <fullName evidence="1">Cytochrome b6-f complex subunit PetG</fullName>
    </alternativeName>
    <alternativeName>
        <fullName evidence="1">Cytochrome b6-f complex subunit V</fullName>
    </alternativeName>
</protein>
<sequence length="37" mass="4170">MIEVFLFGIVLGLIPITLAGLFVTAYLQYRRGDQLDL</sequence>
<dbReference type="EMBL" id="DQ119058">
    <property type="protein sequence ID" value="AAZ94670.1"/>
    <property type="molecule type" value="Genomic_DNA"/>
</dbReference>
<dbReference type="EMBL" id="AJ970307">
    <property type="protein sequence ID" value="CAJ00777.1"/>
    <property type="molecule type" value="Genomic_DNA"/>
</dbReference>
<dbReference type="EMBL" id="DQ865975">
    <property type="protein sequence ID" value="ABI97436.1"/>
    <property type="molecule type" value="Genomic_DNA"/>
</dbReference>
<dbReference type="EMBL" id="DQ865976">
    <property type="protein sequence ID" value="ABI98764.1"/>
    <property type="molecule type" value="Genomic_DNA"/>
</dbReference>
<dbReference type="RefSeq" id="YP_247618.1">
    <property type="nucleotide sequence ID" value="NC_007144.1"/>
</dbReference>
<dbReference type="SMR" id="Q2QD70"/>
<dbReference type="GeneID" id="3429268"/>
<dbReference type="KEGG" id="csv:3429268"/>
<dbReference type="OrthoDB" id="35473at2759"/>
<dbReference type="GO" id="GO:0009535">
    <property type="term" value="C:chloroplast thylakoid membrane"/>
    <property type="evidence" value="ECO:0007669"/>
    <property type="project" value="UniProtKB-SubCell"/>
</dbReference>
<dbReference type="GO" id="GO:0009512">
    <property type="term" value="C:cytochrome b6f complex"/>
    <property type="evidence" value="ECO:0007669"/>
    <property type="project" value="InterPro"/>
</dbReference>
<dbReference type="GO" id="GO:0045158">
    <property type="term" value="F:electron transporter, transferring electrons within cytochrome b6/f complex of photosystem II activity"/>
    <property type="evidence" value="ECO:0007669"/>
    <property type="project" value="UniProtKB-UniRule"/>
</dbReference>
<dbReference type="GO" id="GO:0017004">
    <property type="term" value="P:cytochrome complex assembly"/>
    <property type="evidence" value="ECO:0007669"/>
    <property type="project" value="UniProtKB-UniRule"/>
</dbReference>
<dbReference type="GO" id="GO:0015979">
    <property type="term" value="P:photosynthesis"/>
    <property type="evidence" value="ECO:0007669"/>
    <property type="project" value="UniProtKB-KW"/>
</dbReference>
<dbReference type="HAMAP" id="MF_00432">
    <property type="entry name" value="Cytb6_f_PetG"/>
    <property type="match status" value="1"/>
</dbReference>
<dbReference type="InterPro" id="IPR003683">
    <property type="entry name" value="Cyt_6/f_cplx_su5"/>
</dbReference>
<dbReference type="InterPro" id="IPR036099">
    <property type="entry name" value="Cyt_6/f_cplx_su5_sf"/>
</dbReference>
<dbReference type="NCBIfam" id="NF001907">
    <property type="entry name" value="PRK00665.1"/>
    <property type="match status" value="1"/>
</dbReference>
<dbReference type="Pfam" id="PF02529">
    <property type="entry name" value="PetG"/>
    <property type="match status" value="1"/>
</dbReference>
<dbReference type="PIRSF" id="PIRSF000034">
    <property type="entry name" value="Cyt_b6-f_V"/>
    <property type="match status" value="1"/>
</dbReference>
<dbReference type="SUPFAM" id="SSF103446">
    <property type="entry name" value="PetG subunit of the cytochrome b6f complex"/>
    <property type="match status" value="1"/>
</dbReference>
<gene>
    <name evidence="1" type="primary">petG</name>
    <name type="ordered locus">CsCp059</name>
</gene>
<organism>
    <name type="scientific">Cucumis sativus</name>
    <name type="common">Cucumber</name>
    <dbReference type="NCBI Taxonomy" id="3659"/>
    <lineage>
        <taxon>Eukaryota</taxon>
        <taxon>Viridiplantae</taxon>
        <taxon>Streptophyta</taxon>
        <taxon>Embryophyta</taxon>
        <taxon>Tracheophyta</taxon>
        <taxon>Spermatophyta</taxon>
        <taxon>Magnoliopsida</taxon>
        <taxon>eudicotyledons</taxon>
        <taxon>Gunneridae</taxon>
        <taxon>Pentapetalae</taxon>
        <taxon>rosids</taxon>
        <taxon>fabids</taxon>
        <taxon>Cucurbitales</taxon>
        <taxon>Cucurbitaceae</taxon>
        <taxon>Benincaseae</taxon>
        <taxon>Cucumis</taxon>
    </lineage>
</organism>
<comment type="function">
    <text evidence="1">Component of the cytochrome b6-f complex, which mediates electron transfer between photosystem II (PSII) and photosystem I (PSI), cyclic electron flow around PSI, and state transitions. PetG is required for either the stability or assembly of the cytochrome b6-f complex.</text>
</comment>
<comment type="subunit">
    <text evidence="1">The 4 large subunits of the cytochrome b6-f complex are cytochrome b6, subunit IV (17 kDa polypeptide, PetD), cytochrome f and the Rieske protein, while the 4 small subunits are PetG, PetL, PetM and PetN. The complex functions as a dimer.</text>
</comment>
<comment type="subcellular location">
    <subcellularLocation>
        <location evidence="1">Plastid</location>
        <location evidence="1">Chloroplast thylakoid membrane</location>
        <topology evidence="1">Single-pass membrane protein</topology>
    </subcellularLocation>
</comment>
<comment type="similarity">
    <text evidence="1">Belongs to the PetG family.</text>
</comment>
<proteinExistence type="inferred from homology"/>
<reference key="1">
    <citation type="journal article" date="2006" name="Plant Cell Rep.">
        <title>Complete sequence and organization of the cucumber (Cucumis sativus L. cv. Baekmibaekdadagi) chloroplast genome.</title>
        <authorList>
            <person name="Kim J.-S."/>
            <person name="Jung J.D."/>
            <person name="Lee J.-A."/>
            <person name="Park H.-W."/>
            <person name="Oh K.-H."/>
            <person name="Jeong W.J."/>
            <person name="Choi D.-W."/>
            <person name="Liu J.R."/>
            <person name="Cho K.Y."/>
        </authorList>
    </citation>
    <scope>NUCLEOTIDE SEQUENCE [LARGE SCALE GENOMIC DNA]</scope>
    <source>
        <strain>cv. Baekmibaekdadagi</strain>
    </source>
</reference>
<reference key="2">
    <citation type="journal article" date="2007" name="Cell. Mol. Biol. Lett.">
        <title>The complete structure of the cucumber (Cucumis sativus L.) chloroplast genome: its composition and comparative analysis.</title>
        <authorList>
            <person name="Plader W.W."/>
            <person name="Yukawa Y."/>
            <person name="Sugiura M."/>
            <person name="Malepszy S."/>
        </authorList>
    </citation>
    <scope>NUCLEOTIDE SEQUENCE [LARGE SCALE GENOMIC DNA]</scope>
    <source>
        <strain>cv. Borszczagowski</strain>
    </source>
</reference>
<reference key="3">
    <citation type="journal article" date="2007" name="Genome">
        <title>Sequencing cucumber (Cucumis sativus L.) chloroplast genomes identifies differences between chilling-tolerant and -susceptible cucumber lines.</title>
        <authorList>
            <person name="Chung S.-M."/>
            <person name="Gordon V.S."/>
            <person name="Staub J.E."/>
        </authorList>
    </citation>
    <scope>NUCLEOTIDE SEQUENCE [LARGE SCALE GENOMIC DNA]</scope>
    <source>
        <strain>cv. Chipper</strain>
        <strain>cv. Gy14</strain>
    </source>
</reference>
<accession>Q2QD70</accession>
<accession>A5J1V3</accession>
<accession>Q4VZJ8</accession>
<feature type="chain" id="PRO_0000275485" description="Cytochrome b6-f complex subunit 5">
    <location>
        <begin position="1"/>
        <end position="37"/>
    </location>
</feature>
<feature type="transmembrane region" description="Helical" evidence="1">
    <location>
        <begin position="5"/>
        <end position="25"/>
    </location>
</feature>
<feature type="sequence conflict" description="In Ref. 2; CAJ00777." evidence="2" ref="2">
    <original>F</original>
    <variation>S</variation>
    <location>
        <position position="22"/>
    </location>
</feature>
<name>PETG_CUCSA</name>
<keyword id="KW-0150">Chloroplast</keyword>
<keyword id="KW-0249">Electron transport</keyword>
<keyword id="KW-0472">Membrane</keyword>
<keyword id="KW-0602">Photosynthesis</keyword>
<keyword id="KW-0934">Plastid</keyword>
<keyword id="KW-0793">Thylakoid</keyword>
<keyword id="KW-0812">Transmembrane</keyword>
<keyword id="KW-1133">Transmembrane helix</keyword>
<keyword id="KW-0813">Transport</keyword>
<geneLocation type="chloroplast"/>